<dbReference type="EMBL" id="AE008917">
    <property type="protein sequence ID" value="AAL52258.1"/>
    <property type="status" value="ALT_INIT"/>
    <property type="molecule type" value="Genomic_DNA"/>
</dbReference>
<dbReference type="PIR" id="AG3386">
    <property type="entry name" value="AG3386"/>
</dbReference>
<dbReference type="RefSeq" id="WP_002964021.1">
    <property type="nucleotide sequence ID" value="NZ_GG703778.1"/>
</dbReference>
<dbReference type="SMR" id="P0A4Q1"/>
<dbReference type="GeneID" id="93016732"/>
<dbReference type="KEGG" id="bme:BMEI1077"/>
<dbReference type="KEGG" id="bmel:DK63_336"/>
<dbReference type="PATRIC" id="fig|224914.52.peg.348"/>
<dbReference type="eggNOG" id="COG1862">
    <property type="taxonomic scope" value="Bacteria"/>
</dbReference>
<dbReference type="PhylomeDB" id="P0A4Q1"/>
<dbReference type="Proteomes" id="UP000000419">
    <property type="component" value="Chromosome I"/>
</dbReference>
<dbReference type="GO" id="GO:0005886">
    <property type="term" value="C:plasma membrane"/>
    <property type="evidence" value="ECO:0007669"/>
    <property type="project" value="UniProtKB-SubCell"/>
</dbReference>
<dbReference type="GO" id="GO:0015031">
    <property type="term" value="P:protein transport"/>
    <property type="evidence" value="ECO:0007669"/>
    <property type="project" value="UniProtKB-KW"/>
</dbReference>
<dbReference type="InterPro" id="IPR003849">
    <property type="entry name" value="Preprotein_translocase_YajC"/>
</dbReference>
<dbReference type="NCBIfam" id="TIGR00739">
    <property type="entry name" value="yajC"/>
    <property type="match status" value="1"/>
</dbReference>
<dbReference type="PANTHER" id="PTHR33909">
    <property type="entry name" value="SEC TRANSLOCON ACCESSORY COMPLEX SUBUNIT YAJC"/>
    <property type="match status" value="1"/>
</dbReference>
<dbReference type="PANTHER" id="PTHR33909:SF1">
    <property type="entry name" value="SEC TRANSLOCON ACCESSORY COMPLEX SUBUNIT YAJC"/>
    <property type="match status" value="1"/>
</dbReference>
<dbReference type="Pfam" id="PF02699">
    <property type="entry name" value="YajC"/>
    <property type="match status" value="1"/>
</dbReference>
<dbReference type="PRINTS" id="PR01853">
    <property type="entry name" value="YAJCTRNLCASE"/>
</dbReference>
<dbReference type="SMART" id="SM01323">
    <property type="entry name" value="YajC"/>
    <property type="match status" value="1"/>
</dbReference>
<proteinExistence type="inferred from homology"/>
<protein>
    <recommendedName>
        <fullName>Sec translocon accessory complex subunit YajC</fullName>
    </recommendedName>
    <alternativeName>
        <fullName>Immunogenic membrane protein YajC</fullName>
    </alternativeName>
</protein>
<comment type="function">
    <text evidence="1">The SecYEG-SecDF-YajC-YidC holo-translocon (HTL) protein secretase/insertase is a supercomplex required for protein secretion, insertion of proteins into membranes, and assembly of membrane protein complexes. While the SecYEG complex is essential for assembly of a number of proteins and complexes, the SecDF-YajC-YidC subcomplex facilitates these functions.</text>
</comment>
<comment type="subunit">
    <text evidence="1">Part of the SecDF-YidC-YajC translocase complex. The SecDF-YidC-YajC translocase forms a supercomplex with SecYEG, called the holo-translocon (HTL).</text>
</comment>
<comment type="subcellular location">
    <subcellularLocation>
        <location evidence="1">Cell inner membrane</location>
        <topology evidence="1">Single-pass membrane protein</topology>
    </subcellularLocation>
</comment>
<comment type="similarity">
    <text evidence="3">Belongs to the YajC family.</text>
</comment>
<comment type="sequence caution" evidence="3">
    <conflict type="erroneous initiation">
        <sequence resource="EMBL-CDS" id="AAL52258"/>
    </conflict>
    <text>Extended N-terminus.</text>
</comment>
<gene>
    <name type="primary">yajC</name>
    <name type="ordered locus">BMEI1077</name>
</gene>
<feature type="chain" id="PRO_0000097024" description="Sec translocon accessory complex subunit YajC">
    <location>
        <begin position="1"/>
        <end position="113"/>
    </location>
</feature>
<feature type="transmembrane region" description="Helical" evidence="2">
    <location>
        <begin position="18"/>
        <end position="38"/>
    </location>
</feature>
<accession>P0A4Q1</accession>
<accession>Q9ZG87</accession>
<organism>
    <name type="scientific">Brucella melitensis biotype 1 (strain ATCC 23456 / CCUG 17765 / NCTC 10094 / 16M)</name>
    <dbReference type="NCBI Taxonomy" id="224914"/>
    <lineage>
        <taxon>Bacteria</taxon>
        <taxon>Pseudomonadati</taxon>
        <taxon>Pseudomonadota</taxon>
        <taxon>Alphaproteobacteria</taxon>
        <taxon>Hyphomicrobiales</taxon>
        <taxon>Brucellaceae</taxon>
        <taxon>Brucella/Ochrobactrum group</taxon>
        <taxon>Brucella</taxon>
    </lineage>
</organism>
<name>YAJC_BRUME</name>
<sequence>MFVTPAFAQASGSVVGPDMLMSILPFILIFVIMYFLIIRPQRTQMKKRQEMLNSVRRGDTVVTGGGIVGKVLKVVDDNELELEIADGVRIRVVRATLMDVRVKGEPVADNKNK</sequence>
<keyword id="KW-0997">Cell inner membrane</keyword>
<keyword id="KW-1003">Cell membrane</keyword>
<keyword id="KW-0472">Membrane</keyword>
<keyword id="KW-0653">Protein transport</keyword>
<keyword id="KW-0811">Translocation</keyword>
<keyword id="KW-0812">Transmembrane</keyword>
<keyword id="KW-1133">Transmembrane helix</keyword>
<keyword id="KW-0813">Transport</keyword>
<reference key="1">
    <citation type="journal article" date="2002" name="Proc. Natl. Acad. Sci. U.S.A.">
        <title>The genome sequence of the facultative intracellular pathogen Brucella melitensis.</title>
        <authorList>
            <person name="DelVecchio V.G."/>
            <person name="Kapatral V."/>
            <person name="Redkar R.J."/>
            <person name="Patra G."/>
            <person name="Mujer C."/>
            <person name="Los T."/>
            <person name="Ivanova N."/>
            <person name="Anderson I."/>
            <person name="Bhattacharyya A."/>
            <person name="Lykidis A."/>
            <person name="Reznik G."/>
            <person name="Jablonski L."/>
            <person name="Larsen N."/>
            <person name="D'Souza M."/>
            <person name="Bernal A."/>
            <person name="Mazur M."/>
            <person name="Goltsman E."/>
            <person name="Selkov E."/>
            <person name="Elzer P.H."/>
            <person name="Hagius S."/>
            <person name="O'Callaghan D."/>
            <person name="Letesson J.-J."/>
            <person name="Haselkorn R."/>
            <person name="Kyrpides N.C."/>
            <person name="Overbeek R."/>
        </authorList>
    </citation>
    <scope>NUCLEOTIDE SEQUENCE [LARGE SCALE GENOMIC DNA]</scope>
    <source>
        <strain>ATCC 23456 / CCUG 17765 / NCTC 10094 / 16M</strain>
    </source>
</reference>
<evidence type="ECO:0000250" key="1">
    <source>
        <dbReference type="UniProtKB" id="P0ADZ7"/>
    </source>
</evidence>
<evidence type="ECO:0000255" key="2"/>
<evidence type="ECO:0000305" key="3"/>